<dbReference type="EMBL" id="AM180355">
    <property type="protein sequence ID" value="CAJ70390.1"/>
    <property type="molecule type" value="Genomic_DNA"/>
</dbReference>
<dbReference type="RefSeq" id="WP_003421397.1">
    <property type="nucleotide sequence ID" value="NZ_JAUPES010000009.1"/>
</dbReference>
<dbReference type="RefSeq" id="YP_001090007.1">
    <property type="nucleotide sequence ID" value="NC_009089.1"/>
</dbReference>
<dbReference type="SMR" id="Q180Y7"/>
<dbReference type="STRING" id="272563.CD630_34861"/>
<dbReference type="EnsemblBacteria" id="CAJ70390">
    <property type="protein sequence ID" value="CAJ70390"/>
    <property type="gene ID" value="CD630_34861"/>
</dbReference>
<dbReference type="GeneID" id="66355948"/>
<dbReference type="KEGG" id="cdf:CD630_34861"/>
<dbReference type="KEGG" id="pdc:CDIF630_03798"/>
<dbReference type="PATRIC" id="fig|272563.120.peg.3685"/>
<dbReference type="eggNOG" id="COG0254">
    <property type="taxonomic scope" value="Bacteria"/>
</dbReference>
<dbReference type="OrthoDB" id="9803251at2"/>
<dbReference type="PhylomeDB" id="Q180Y7"/>
<dbReference type="BioCyc" id="PDIF272563:G12WB-3667-MONOMER"/>
<dbReference type="Proteomes" id="UP000001978">
    <property type="component" value="Chromosome"/>
</dbReference>
<dbReference type="GO" id="GO:1990904">
    <property type="term" value="C:ribonucleoprotein complex"/>
    <property type="evidence" value="ECO:0007669"/>
    <property type="project" value="UniProtKB-KW"/>
</dbReference>
<dbReference type="GO" id="GO:0005840">
    <property type="term" value="C:ribosome"/>
    <property type="evidence" value="ECO:0007669"/>
    <property type="project" value="UniProtKB-KW"/>
</dbReference>
<dbReference type="GO" id="GO:0046872">
    <property type="term" value="F:metal ion binding"/>
    <property type="evidence" value="ECO:0007669"/>
    <property type="project" value="UniProtKB-KW"/>
</dbReference>
<dbReference type="GO" id="GO:0019843">
    <property type="term" value="F:rRNA binding"/>
    <property type="evidence" value="ECO:0007669"/>
    <property type="project" value="UniProtKB-KW"/>
</dbReference>
<dbReference type="GO" id="GO:0003735">
    <property type="term" value="F:structural constituent of ribosome"/>
    <property type="evidence" value="ECO:0007669"/>
    <property type="project" value="InterPro"/>
</dbReference>
<dbReference type="GO" id="GO:0006412">
    <property type="term" value="P:translation"/>
    <property type="evidence" value="ECO:0007669"/>
    <property type="project" value="UniProtKB-UniRule"/>
</dbReference>
<dbReference type="Gene3D" id="4.10.830.30">
    <property type="entry name" value="Ribosomal protein L31"/>
    <property type="match status" value="1"/>
</dbReference>
<dbReference type="HAMAP" id="MF_00501">
    <property type="entry name" value="Ribosomal_bL31_1"/>
    <property type="match status" value="1"/>
</dbReference>
<dbReference type="InterPro" id="IPR034704">
    <property type="entry name" value="Ribosomal_bL28/bL31-like_sf"/>
</dbReference>
<dbReference type="InterPro" id="IPR002150">
    <property type="entry name" value="Ribosomal_bL31"/>
</dbReference>
<dbReference type="InterPro" id="IPR027491">
    <property type="entry name" value="Ribosomal_bL31_A"/>
</dbReference>
<dbReference type="InterPro" id="IPR042105">
    <property type="entry name" value="Ribosomal_bL31_sf"/>
</dbReference>
<dbReference type="NCBIfam" id="TIGR00105">
    <property type="entry name" value="L31"/>
    <property type="match status" value="1"/>
</dbReference>
<dbReference type="NCBIfam" id="NF000612">
    <property type="entry name" value="PRK00019.1"/>
    <property type="match status" value="1"/>
</dbReference>
<dbReference type="PANTHER" id="PTHR33280">
    <property type="entry name" value="50S RIBOSOMAL PROTEIN L31, CHLOROPLASTIC"/>
    <property type="match status" value="1"/>
</dbReference>
<dbReference type="PANTHER" id="PTHR33280:SF1">
    <property type="entry name" value="LARGE RIBOSOMAL SUBUNIT PROTEIN BL31C"/>
    <property type="match status" value="1"/>
</dbReference>
<dbReference type="Pfam" id="PF01197">
    <property type="entry name" value="Ribosomal_L31"/>
    <property type="match status" value="1"/>
</dbReference>
<dbReference type="PRINTS" id="PR01249">
    <property type="entry name" value="RIBOSOMALL31"/>
</dbReference>
<dbReference type="SUPFAM" id="SSF143800">
    <property type="entry name" value="L28p-like"/>
    <property type="match status" value="1"/>
</dbReference>
<dbReference type="PROSITE" id="PS01143">
    <property type="entry name" value="RIBOSOMAL_L31"/>
    <property type="match status" value="1"/>
</dbReference>
<sequence>MQKEIQPKYNPVEVRCACGNTFVAGSTKDEIKVEICSECHPFYTGKQKNIEKGGRIDKFKKRFKMD</sequence>
<organism>
    <name type="scientific">Clostridioides difficile (strain 630)</name>
    <name type="common">Peptoclostridium difficile</name>
    <dbReference type="NCBI Taxonomy" id="272563"/>
    <lineage>
        <taxon>Bacteria</taxon>
        <taxon>Bacillati</taxon>
        <taxon>Bacillota</taxon>
        <taxon>Clostridia</taxon>
        <taxon>Peptostreptococcales</taxon>
        <taxon>Peptostreptococcaceae</taxon>
        <taxon>Clostridioides</taxon>
    </lineage>
</organism>
<accession>Q180Y7</accession>
<reference key="1">
    <citation type="journal article" date="2006" name="Nat. Genet.">
        <title>The multidrug-resistant human pathogen Clostridium difficile has a highly mobile, mosaic genome.</title>
        <authorList>
            <person name="Sebaihia M."/>
            <person name="Wren B.W."/>
            <person name="Mullany P."/>
            <person name="Fairweather N.F."/>
            <person name="Minton N."/>
            <person name="Stabler R."/>
            <person name="Thomson N.R."/>
            <person name="Roberts A.P."/>
            <person name="Cerdeno-Tarraga A.M."/>
            <person name="Wang H."/>
            <person name="Holden M.T.G."/>
            <person name="Wright A."/>
            <person name="Churcher C."/>
            <person name="Quail M.A."/>
            <person name="Baker S."/>
            <person name="Bason N."/>
            <person name="Brooks K."/>
            <person name="Chillingworth T."/>
            <person name="Cronin A."/>
            <person name="Davis P."/>
            <person name="Dowd L."/>
            <person name="Fraser A."/>
            <person name="Feltwell T."/>
            <person name="Hance Z."/>
            <person name="Holroyd S."/>
            <person name="Jagels K."/>
            <person name="Moule S."/>
            <person name="Mungall K."/>
            <person name="Price C."/>
            <person name="Rabbinowitsch E."/>
            <person name="Sharp S."/>
            <person name="Simmonds M."/>
            <person name="Stevens K."/>
            <person name="Unwin L."/>
            <person name="Whithead S."/>
            <person name="Dupuy B."/>
            <person name="Dougan G."/>
            <person name="Barrell B."/>
            <person name="Parkhill J."/>
        </authorList>
    </citation>
    <scope>NUCLEOTIDE SEQUENCE [LARGE SCALE GENOMIC DNA]</scope>
    <source>
        <strain>630</strain>
    </source>
</reference>
<gene>
    <name evidence="1" type="primary">rpmE</name>
    <name type="ordered locus">CD630_34861</name>
    <name type="ORF">CD3486A</name>
</gene>
<name>RL31_CLOD6</name>
<evidence type="ECO:0000255" key="1">
    <source>
        <dbReference type="HAMAP-Rule" id="MF_00501"/>
    </source>
</evidence>
<evidence type="ECO:0000305" key="2"/>
<proteinExistence type="inferred from homology"/>
<feature type="chain" id="PRO_0000259175" description="Large ribosomal subunit protein bL31">
    <location>
        <begin position="1"/>
        <end position="66"/>
    </location>
</feature>
<feature type="binding site" evidence="1">
    <location>
        <position position="16"/>
    </location>
    <ligand>
        <name>Zn(2+)</name>
        <dbReference type="ChEBI" id="CHEBI:29105"/>
    </ligand>
</feature>
<feature type="binding site" evidence="1">
    <location>
        <position position="18"/>
    </location>
    <ligand>
        <name>Zn(2+)</name>
        <dbReference type="ChEBI" id="CHEBI:29105"/>
    </ligand>
</feature>
<feature type="binding site" evidence="1">
    <location>
        <position position="36"/>
    </location>
    <ligand>
        <name>Zn(2+)</name>
        <dbReference type="ChEBI" id="CHEBI:29105"/>
    </ligand>
</feature>
<feature type="binding site" evidence="1">
    <location>
        <position position="39"/>
    </location>
    <ligand>
        <name>Zn(2+)</name>
        <dbReference type="ChEBI" id="CHEBI:29105"/>
    </ligand>
</feature>
<comment type="function">
    <text evidence="1">Binds the 23S rRNA.</text>
</comment>
<comment type="cofactor">
    <cofactor evidence="1">
        <name>Zn(2+)</name>
        <dbReference type="ChEBI" id="CHEBI:29105"/>
    </cofactor>
    <text evidence="1">Binds 1 zinc ion per subunit.</text>
</comment>
<comment type="subunit">
    <text evidence="1">Part of the 50S ribosomal subunit.</text>
</comment>
<comment type="similarity">
    <text evidence="1">Belongs to the bacterial ribosomal protein bL31 family. Type A subfamily.</text>
</comment>
<protein>
    <recommendedName>
        <fullName evidence="1">Large ribosomal subunit protein bL31</fullName>
    </recommendedName>
    <alternativeName>
        <fullName evidence="2">50S ribosomal protein L31</fullName>
    </alternativeName>
</protein>
<keyword id="KW-0479">Metal-binding</keyword>
<keyword id="KW-1185">Reference proteome</keyword>
<keyword id="KW-0687">Ribonucleoprotein</keyword>
<keyword id="KW-0689">Ribosomal protein</keyword>
<keyword id="KW-0694">RNA-binding</keyword>
<keyword id="KW-0699">rRNA-binding</keyword>
<keyword id="KW-0862">Zinc</keyword>